<gene>
    <name type="primary">Cd101</name>
    <name type="synonym">Igsf2</name>
</gene>
<protein>
    <recommendedName>
        <fullName>Immunoglobulin superfamily member 2</fullName>
        <shortName>IgSF2</shortName>
    </recommendedName>
    <alternativeName>
        <fullName>Glu-Trp-Ile EWI motif-containing protein 101</fullName>
        <shortName>EWI-101</shortName>
    </alternativeName>
    <cdAntigenName>CD101</cdAntigenName>
</protein>
<sequence length="1033" mass="114205">MACILCVASLFLSLTKFSIGQREVKIQEGPLYRAEGYPVSIRCTVSGHQGPSTQDFRWSIYLPSAPTKEVQIISTKDAGFSYAVYAQRVQSKEIYIERLQGDSVLLHISKLQMKDAGEYECHTPNTDGKYFGSYSAKTNLTVVPDTLSATMPSQTLSKKEGEPLELTCETTKATVQHTHLSLTWYLMQEGGGSQATEIVSLSKDFVLTPGSSYADRFVAGDVRLDKLGATSFRLSVGKLQPSDQGQVFCEATEWIQDPDETWTLITRKQTDQTALRIQPAARDFTVSITASSSPDEGKPLELVCLAVGRDGNPQLQGVWFLNGKEIAQTDAGGVLDLKRDYRDRASQGQLQVSKLSAQTFSLKIFSVGPEDVGTYSCEVAEVARTQMGSWQVLQRKQSPGYRVQLREPAARSVTVSAEQRTVWEGETLTLLCKAAGDVSALSVSWWLTPQDQSTPVFVAGMGQDGTVQLGVSSPGPAHRGNRRLEKVDWATFRLEIASAMVTDSGTYECRVSERLQNQAKGLQSTQKISVTVKSLKSSLRVNLMSRQPQVMLAHTFHLSCVVRANYSDLKLPFSVTWQFQPAGSGAFHRLIRIAHNGTVEWGDVLSQIHRKTKVSQSFFRSQLQIYDAAMEETGVYRCTVEVYDRDSICTSGPARVSATSNLLMITVTFPESKLSVNSSSQVQELSISSSTQIECAILSRSAGNLPLSIIWYFSSVSANASYLKILEMDQSSVVKYGDEFQTPRSKQKFYSEKVSQDLFLLNILSVEDSDQGHYHCAVEEWLLSTNDTWQKLERKTSGLTELKLRPTGSQVHVSKVNWTGNATEYGEAGFSCSLDGSGSTASLYSVTWYRGRGTATATAAAVANATATITAPAGSQMLVHLQYDGLLQYGREGSRRLQHCYRSSPTDFVLKLHRVEMEDAGIYWCRVTEWQQHGHPGKWINQASGESQRMVLRVLRSEPTVSSLICSSGPLLHFLIVCPFVMLLLLATSFLCLYRKARKLSQLSLSAKKEKALWVGMRKTSLQKEAGEESGHY</sequence>
<dbReference type="EMBL" id="AM849328">
    <property type="protein sequence ID" value="CAO94506.1"/>
    <property type="molecule type" value="mRNA"/>
</dbReference>
<dbReference type="EMBL" id="AM849329">
    <property type="protein sequence ID" value="CAO94507.1"/>
    <property type="molecule type" value="mRNA"/>
</dbReference>
<dbReference type="CCDS" id="CCDS51020.1"/>
<dbReference type="RefSeq" id="NP_001161378.1">
    <property type="nucleotide sequence ID" value="NM_001167906.2"/>
</dbReference>
<dbReference type="STRING" id="10090.ENSMUSP00000116643"/>
<dbReference type="GlyCosmos" id="A8E0Y8">
    <property type="glycosylation" value="2 sites, No reported glycans"/>
</dbReference>
<dbReference type="GlyGen" id="A8E0Y8">
    <property type="glycosylation" value="2 sites"/>
</dbReference>
<dbReference type="iPTMnet" id="A8E0Y8"/>
<dbReference type="PhosphoSitePlus" id="A8E0Y8"/>
<dbReference type="PaxDb" id="10090-ENSMUSP00000116643"/>
<dbReference type="ProteomicsDB" id="267302"/>
<dbReference type="Antibodypedia" id="20186">
    <property type="antibodies" value="367 antibodies from 33 providers"/>
</dbReference>
<dbReference type="Ensembl" id="ENSMUST00000147399.9">
    <property type="protein sequence ID" value="ENSMUSP00000116643.3"/>
    <property type="gene ID" value="ENSMUSG00000086564.10"/>
</dbReference>
<dbReference type="GeneID" id="630146"/>
<dbReference type="KEGG" id="mmu:630146"/>
<dbReference type="UCSC" id="uc012cuu.1">
    <property type="organism name" value="mouse"/>
</dbReference>
<dbReference type="AGR" id="MGI:2685862"/>
<dbReference type="CTD" id="9398"/>
<dbReference type="MGI" id="MGI:2685862">
    <property type="gene designation" value="Cd101"/>
</dbReference>
<dbReference type="VEuPathDB" id="HostDB:ENSMUSG00000086564"/>
<dbReference type="eggNOG" id="ENOG502QRRB">
    <property type="taxonomic scope" value="Eukaryota"/>
</dbReference>
<dbReference type="GeneTree" id="ENSGT00940000161722"/>
<dbReference type="HOGENOM" id="CLU_005187_0_0_1"/>
<dbReference type="InParanoid" id="A8E0Y8"/>
<dbReference type="OMA" id="SKWVNQA"/>
<dbReference type="OrthoDB" id="9890427at2759"/>
<dbReference type="PhylomeDB" id="A8E0Y8"/>
<dbReference type="TreeFam" id="TF332702"/>
<dbReference type="Reactome" id="R-MMU-202433">
    <property type="pathway name" value="Generation of second messenger molecules"/>
</dbReference>
<dbReference type="BioGRID-ORCS" id="630146">
    <property type="hits" value="1 hit in 79 CRISPR screens"/>
</dbReference>
<dbReference type="PRO" id="PR:A8E0Y8"/>
<dbReference type="Proteomes" id="UP000000589">
    <property type="component" value="Chromosome 3"/>
</dbReference>
<dbReference type="RNAct" id="A8E0Y8">
    <property type="molecule type" value="protein"/>
</dbReference>
<dbReference type="Bgee" id="ENSMUSG00000086564">
    <property type="expression patterns" value="Expressed in granulocyte and 16 other cell types or tissues"/>
</dbReference>
<dbReference type="ExpressionAtlas" id="A8E0Y8">
    <property type="expression patterns" value="baseline and differential"/>
</dbReference>
<dbReference type="GO" id="GO:0016020">
    <property type="term" value="C:membrane"/>
    <property type="evidence" value="ECO:0007669"/>
    <property type="project" value="UniProtKB-SubCell"/>
</dbReference>
<dbReference type="GO" id="GO:0002763">
    <property type="term" value="P:positive regulation of myeloid leukocyte differentiation"/>
    <property type="evidence" value="ECO:0000315"/>
    <property type="project" value="MGI"/>
</dbReference>
<dbReference type="CDD" id="cd00099">
    <property type="entry name" value="IgV"/>
    <property type="match status" value="1"/>
</dbReference>
<dbReference type="FunFam" id="2.60.40.10:FF:001387">
    <property type="entry name" value="CD101 molecule"/>
    <property type="match status" value="1"/>
</dbReference>
<dbReference type="FunFam" id="2.60.40.10:FF:001440">
    <property type="entry name" value="CD101 molecule"/>
    <property type="match status" value="1"/>
</dbReference>
<dbReference type="FunFam" id="2.60.40.10:FF:001456">
    <property type="entry name" value="CD101 molecule"/>
    <property type="match status" value="1"/>
</dbReference>
<dbReference type="FunFam" id="2.60.40.10:FF:001481">
    <property type="entry name" value="CD101 molecule"/>
    <property type="match status" value="1"/>
</dbReference>
<dbReference type="FunFam" id="2.60.40.10:FF:001961">
    <property type="entry name" value="CD101 molecule"/>
    <property type="match status" value="1"/>
</dbReference>
<dbReference type="FunFam" id="2.60.40.10:FF:000191">
    <property type="entry name" value="Immunoglobulin superfamily member 3"/>
    <property type="match status" value="1"/>
</dbReference>
<dbReference type="FunFam" id="2.60.40.10:FF:000491">
    <property type="entry name" value="Immunoglobulin superfamily, member 3"/>
    <property type="match status" value="1"/>
</dbReference>
<dbReference type="Gene3D" id="2.60.40.10">
    <property type="entry name" value="Immunoglobulins"/>
    <property type="match status" value="7"/>
</dbReference>
<dbReference type="InterPro" id="IPR007110">
    <property type="entry name" value="Ig-like_dom"/>
</dbReference>
<dbReference type="InterPro" id="IPR036179">
    <property type="entry name" value="Ig-like_dom_sf"/>
</dbReference>
<dbReference type="InterPro" id="IPR013783">
    <property type="entry name" value="Ig-like_fold"/>
</dbReference>
<dbReference type="InterPro" id="IPR003599">
    <property type="entry name" value="Ig_sub"/>
</dbReference>
<dbReference type="InterPro" id="IPR003598">
    <property type="entry name" value="Ig_sub2"/>
</dbReference>
<dbReference type="InterPro" id="IPR013106">
    <property type="entry name" value="Ig_V-set"/>
</dbReference>
<dbReference type="InterPro" id="IPR051102">
    <property type="entry name" value="IgSF_V-set/TM_domain"/>
</dbReference>
<dbReference type="InterPro" id="IPR013151">
    <property type="entry name" value="Immunoglobulin_dom"/>
</dbReference>
<dbReference type="PANTHER" id="PTHR12207:SF25">
    <property type="entry name" value="IMMUNOGLOBULIN SUPERFAMILY MEMBER 2"/>
    <property type="match status" value="1"/>
</dbReference>
<dbReference type="PANTHER" id="PTHR12207">
    <property type="entry name" value="V-SET AND TRANSMEMBRANE DOMAIN-CONTAINING PROTEIN"/>
    <property type="match status" value="1"/>
</dbReference>
<dbReference type="Pfam" id="PF00047">
    <property type="entry name" value="ig"/>
    <property type="match status" value="1"/>
</dbReference>
<dbReference type="Pfam" id="PF07686">
    <property type="entry name" value="V-set"/>
    <property type="match status" value="2"/>
</dbReference>
<dbReference type="SMART" id="SM00409">
    <property type="entry name" value="IG"/>
    <property type="match status" value="7"/>
</dbReference>
<dbReference type="SMART" id="SM00408">
    <property type="entry name" value="IGc2"/>
    <property type="match status" value="3"/>
</dbReference>
<dbReference type="SMART" id="SM00406">
    <property type="entry name" value="IGv"/>
    <property type="match status" value="5"/>
</dbReference>
<dbReference type="SUPFAM" id="SSF48726">
    <property type="entry name" value="Immunoglobulin"/>
    <property type="match status" value="7"/>
</dbReference>
<dbReference type="PROSITE" id="PS50835">
    <property type="entry name" value="IG_LIKE"/>
    <property type="match status" value="7"/>
</dbReference>
<keyword id="KW-1015">Disulfide bond</keyword>
<keyword id="KW-0325">Glycoprotein</keyword>
<keyword id="KW-0393">Immunoglobulin domain</keyword>
<keyword id="KW-0472">Membrane</keyword>
<keyword id="KW-1185">Reference proteome</keyword>
<keyword id="KW-0677">Repeat</keyword>
<keyword id="KW-0732">Signal</keyword>
<keyword id="KW-0812">Transmembrane</keyword>
<keyword id="KW-1133">Transmembrane helix</keyword>
<comment type="function">
    <text evidence="1">Plays a role as inhibitor of T-cells proliferation induced by CD3. Inhibits expression of IL2RA on activated T-cells and secretion of IL2. Inhibits tyrosine kinases that are required for IL2 production and cellular proliferation. Inhibits phospholipase C-gamma-1/PLCG1 phosphorylation and subsequent CD3-induced changes in intracellular free calcium. Prevents nuclear translocation of nuclear factor of activated T-cell to the nucleus. Plays a role in the inhibition of T-cell proliferation via IL10 secretion by cutaneous dendritic cells (By similarity).</text>
</comment>
<comment type="subcellular location">
    <subcellularLocation>
        <location evidence="4">Membrane</location>
        <topology evidence="4">Single-pass type I membrane protein</topology>
    </subcellularLocation>
</comment>
<comment type="PTM">
    <text evidence="1">N-glycosylated.</text>
</comment>
<name>IGSF2_MOUSE</name>
<feature type="signal peptide" evidence="2">
    <location>
        <begin position="1"/>
        <end position="20"/>
    </location>
</feature>
<feature type="chain" id="PRO_0000363951" description="Immunoglobulin superfamily member 2">
    <location>
        <begin position="21"/>
        <end position="1033"/>
    </location>
</feature>
<feature type="topological domain" description="Extracellular" evidence="2">
    <location>
        <begin position="21"/>
        <end position="970"/>
    </location>
</feature>
<feature type="transmembrane region" description="Helical" evidence="2">
    <location>
        <begin position="971"/>
        <end position="991"/>
    </location>
</feature>
<feature type="topological domain" description="Cytoplasmic" evidence="2">
    <location>
        <begin position="992"/>
        <end position="1033"/>
    </location>
</feature>
<feature type="domain" description="Ig-like C2-type 1">
    <location>
        <begin position="22"/>
        <end position="141"/>
    </location>
</feature>
<feature type="domain" description="Ig-like C2-type 2">
    <location>
        <begin position="144"/>
        <end position="266"/>
    </location>
</feature>
<feature type="domain" description="Ig-like C2-type 3">
    <location>
        <begin position="279"/>
        <end position="388"/>
    </location>
</feature>
<feature type="domain" description="Ig-like C2-type 4">
    <location>
        <begin position="408"/>
        <end position="529"/>
    </location>
</feature>
<feature type="domain" description="Ig-like C2-type 5">
    <location>
        <begin position="539"/>
        <end position="657"/>
    </location>
</feature>
<feature type="domain" description="Ig-like C2-type 6">
    <location>
        <begin position="670"/>
        <end position="797"/>
    </location>
</feature>
<feature type="domain" description="Ig-like C2-type 7">
    <location>
        <begin position="806"/>
        <end position="941"/>
    </location>
</feature>
<feature type="short sequence motif" description="EWI motif">
    <location>
        <begin position="253"/>
        <end position="255"/>
    </location>
</feature>
<feature type="glycosylation site" description="N-linked (GlcNAc...) asparagine" evidence="2">
    <location>
        <position position="139"/>
    </location>
</feature>
<feature type="glycosylation site" description="N-linked (GlcNAc...) asparagine" evidence="2">
    <location>
        <position position="677"/>
    </location>
</feature>
<feature type="disulfide bond" evidence="3">
    <location>
        <begin position="43"/>
        <end position="121"/>
    </location>
</feature>
<feature type="disulfide bond" evidence="3">
    <location>
        <begin position="168"/>
        <end position="249"/>
    </location>
</feature>
<feature type="disulfide bond" evidence="3">
    <location>
        <begin position="304"/>
        <end position="377"/>
    </location>
</feature>
<feature type="disulfide bond" evidence="3">
    <location>
        <begin position="432"/>
        <end position="509"/>
    </location>
</feature>
<feature type="disulfide bond" evidence="3">
    <location>
        <begin position="560"/>
        <end position="638"/>
    </location>
</feature>
<feature type="disulfide bond" evidence="3">
    <location>
        <begin position="695"/>
        <end position="776"/>
    </location>
</feature>
<feature type="disulfide bond" evidence="3">
    <location>
        <begin position="832"/>
        <end position="925"/>
    </location>
</feature>
<feature type="sequence variant" description="In strain: NOD/MrkTac.">
    <original>V</original>
    <variation>A</variation>
    <location>
        <position position="175"/>
    </location>
</feature>
<feature type="sequence variant" description="In strain: NOD/MrkTac.">
    <original>E</original>
    <variation>K</variation>
    <location>
        <position position="296"/>
    </location>
</feature>
<feature type="sequence variant" description="In strain: NOD/MrkTac.">
    <original>V</original>
    <variation>A</variation>
    <location>
        <position position="318"/>
    </location>
</feature>
<feature type="sequence variant" description="In strain: NOD/MrkTac.">
    <original>V</original>
    <variation>I</variation>
    <location>
        <position position="392"/>
    </location>
</feature>
<feature type="sequence variant" description="In strain: NOD/MrkTac.">
    <original>D</original>
    <variation>N</variation>
    <location>
        <position position="451"/>
    </location>
</feature>
<feature type="sequence variant" description="In strain: NOD/MrkTac.">
    <original>H</original>
    <variation>D</variation>
    <location>
        <position position="557"/>
    </location>
</feature>
<feature type="sequence variant" description="In strain: NOD/MrkTac.">
    <original>N</original>
    <variation>D</variation>
    <location>
        <position position="565"/>
    </location>
</feature>
<feature type="sequence variant" description="In strain: NOD/MrkTac.">
    <original>R</original>
    <variation>H</variation>
    <location>
        <position position="620"/>
    </location>
</feature>
<feature type="sequence variant" description="In strain: NOD/MrkTac.">
    <original>I</original>
    <variation>M</variation>
    <location>
        <position position="648"/>
    </location>
</feature>
<feature type="sequence variant" description="In strain: NOD/MrkTac.">
    <original>A</original>
    <variation>T</variation>
    <location>
        <position position="860"/>
    </location>
</feature>
<organism>
    <name type="scientific">Mus musculus</name>
    <name type="common">Mouse</name>
    <dbReference type="NCBI Taxonomy" id="10090"/>
    <lineage>
        <taxon>Eukaryota</taxon>
        <taxon>Metazoa</taxon>
        <taxon>Chordata</taxon>
        <taxon>Craniata</taxon>
        <taxon>Vertebrata</taxon>
        <taxon>Euteleostomi</taxon>
        <taxon>Mammalia</taxon>
        <taxon>Eutheria</taxon>
        <taxon>Euarchontoglires</taxon>
        <taxon>Glires</taxon>
        <taxon>Rodentia</taxon>
        <taxon>Myomorpha</taxon>
        <taxon>Muroidea</taxon>
        <taxon>Muridae</taxon>
        <taxon>Murinae</taxon>
        <taxon>Mus</taxon>
        <taxon>Mus</taxon>
    </lineage>
</organism>
<reference key="1">
    <citation type="journal article" date="2003" name="Diabetes">
        <title>Identification of a structurally distinct CD101 molecule encoded in the 950-kb Idd10 region of NOD mice.</title>
        <authorList>
            <person name="Penha-Goncalves C."/>
            <person name="Moule C."/>
            <person name="Smink L.J."/>
            <person name="Howson J."/>
            <person name="Gregory S."/>
            <person name="Rogers J."/>
            <person name="Lyons P.A."/>
            <person name="Suttie J.J."/>
            <person name="Lord C.J."/>
            <person name="Peterson L.B."/>
            <person name="Todd J.A."/>
            <person name="Wicker L.S."/>
        </authorList>
    </citation>
    <scope>NUCLEOTIDE SEQUENCE [MRNA]</scope>
    <source>
        <strain>NOD.B6</strain>
        <strain>NOD/MrkTac</strain>
    </source>
</reference>
<accession>A8E0Y8</accession>
<accession>A8E0Y9</accession>
<proteinExistence type="evidence at transcript level"/>
<evidence type="ECO:0000250" key="1"/>
<evidence type="ECO:0000255" key="2"/>
<evidence type="ECO:0000255" key="3">
    <source>
        <dbReference type="PROSITE-ProRule" id="PRU00114"/>
    </source>
</evidence>
<evidence type="ECO:0000305" key="4"/>